<name>RGS4_RAT</name>
<evidence type="ECO:0000250" key="1"/>
<evidence type="ECO:0000255" key="2">
    <source>
        <dbReference type="PROSITE-ProRule" id="PRU00171"/>
    </source>
</evidence>
<evidence type="ECO:0000269" key="3">
    <source>
    </source>
</evidence>
<evidence type="ECO:0007829" key="4">
    <source>
        <dbReference type="PDB" id="1AGR"/>
    </source>
</evidence>
<protein>
    <recommendedName>
        <fullName>Regulator of G-protein signaling 4</fullName>
        <shortName>RGP4</shortName>
        <shortName>RGS4</shortName>
    </recommendedName>
</protein>
<proteinExistence type="evidence at protein level"/>
<accession>P49799</accession>
<gene>
    <name type="primary">Rgs4</name>
</gene>
<dbReference type="EMBL" id="U27767">
    <property type="protein sequence ID" value="AAC52440.1"/>
    <property type="molecule type" value="mRNA"/>
</dbReference>
<dbReference type="EMBL" id="AF117211">
    <property type="protein sequence ID" value="AAD12065.1"/>
    <property type="molecule type" value="mRNA"/>
</dbReference>
<dbReference type="EMBL" id="U32327">
    <property type="protein sequence ID" value="AAC52367.1"/>
    <property type="molecule type" value="mRNA"/>
</dbReference>
<dbReference type="RefSeq" id="NP_058910.1">
    <property type="nucleotide sequence ID" value="NM_017214.2"/>
</dbReference>
<dbReference type="PDB" id="1AGR">
    <property type="method" value="X-ray"/>
    <property type="resolution" value="2.80 A"/>
    <property type="chains" value="E/H=1-205"/>
</dbReference>
<dbReference type="PDB" id="1EZT">
    <property type="method" value="NMR"/>
    <property type="chains" value="A=51-205"/>
</dbReference>
<dbReference type="PDB" id="1EZY">
    <property type="method" value="NMR"/>
    <property type="chains" value="A=51-205"/>
</dbReference>
<dbReference type="PDBsum" id="1AGR"/>
<dbReference type="PDBsum" id="1EZT"/>
<dbReference type="PDBsum" id="1EZY"/>
<dbReference type="BMRB" id="P49799"/>
<dbReference type="SMR" id="P49799"/>
<dbReference type="CORUM" id="P49799"/>
<dbReference type="DIP" id="DIP-6074N"/>
<dbReference type="FunCoup" id="P49799">
    <property type="interactions" value="239"/>
</dbReference>
<dbReference type="IntAct" id="P49799">
    <property type="interactions" value="3"/>
</dbReference>
<dbReference type="MINT" id="P49799"/>
<dbReference type="STRING" id="10116.ENSRNOP00000003774"/>
<dbReference type="GuidetoPHARMACOLOGY" id="2811"/>
<dbReference type="PhosphoSitePlus" id="P49799"/>
<dbReference type="SwissPalm" id="P49799"/>
<dbReference type="PaxDb" id="10116-ENSRNOP00000003774"/>
<dbReference type="Ensembl" id="ENSRNOT00000003774.3">
    <property type="protein sequence ID" value="ENSRNOP00000003774.2"/>
    <property type="gene ID" value="ENSRNOG00000002773.3"/>
</dbReference>
<dbReference type="GeneID" id="29480"/>
<dbReference type="KEGG" id="rno:29480"/>
<dbReference type="UCSC" id="RGD:3567">
    <property type="organism name" value="rat"/>
</dbReference>
<dbReference type="AGR" id="RGD:3567"/>
<dbReference type="CTD" id="5999"/>
<dbReference type="RGD" id="3567">
    <property type="gene designation" value="Rgs4"/>
</dbReference>
<dbReference type="eggNOG" id="KOG3589">
    <property type="taxonomic scope" value="Eukaryota"/>
</dbReference>
<dbReference type="GeneTree" id="ENSGT00940000159036"/>
<dbReference type="HOGENOM" id="CLU_059863_3_0_1"/>
<dbReference type="InParanoid" id="P49799"/>
<dbReference type="OMA" id="LIQDLCQ"/>
<dbReference type="OrthoDB" id="196547at2759"/>
<dbReference type="PhylomeDB" id="P49799"/>
<dbReference type="TreeFam" id="TF315837"/>
<dbReference type="Reactome" id="R-RNO-416476">
    <property type="pathway name" value="G alpha (q) signalling events"/>
</dbReference>
<dbReference type="Reactome" id="R-RNO-418594">
    <property type="pathway name" value="G alpha (i) signalling events"/>
</dbReference>
<dbReference type="EvolutionaryTrace" id="P49799"/>
<dbReference type="PRO" id="PR:P49799"/>
<dbReference type="Proteomes" id="UP000002494">
    <property type="component" value="Chromosome 13"/>
</dbReference>
<dbReference type="Bgee" id="ENSRNOG00000002773">
    <property type="expression patterns" value="Expressed in frontal cortex and 20 other cell types or tissues"/>
</dbReference>
<dbReference type="GO" id="GO:0005737">
    <property type="term" value="C:cytoplasm"/>
    <property type="evidence" value="ECO:0000266"/>
    <property type="project" value="RGD"/>
</dbReference>
<dbReference type="GO" id="GO:0005634">
    <property type="term" value="C:nucleus"/>
    <property type="evidence" value="ECO:0000266"/>
    <property type="project" value="RGD"/>
</dbReference>
<dbReference type="GO" id="GO:0032991">
    <property type="term" value="C:protein-containing complex"/>
    <property type="evidence" value="ECO:0000314"/>
    <property type="project" value="RGD"/>
</dbReference>
<dbReference type="GO" id="GO:0001965">
    <property type="term" value="F:G-protein alpha-subunit binding"/>
    <property type="evidence" value="ECO:0000314"/>
    <property type="project" value="RGD"/>
</dbReference>
<dbReference type="GO" id="GO:0005096">
    <property type="term" value="F:GTPase activator activity"/>
    <property type="evidence" value="ECO:0000314"/>
    <property type="project" value="RGD"/>
</dbReference>
<dbReference type="GO" id="GO:0019901">
    <property type="term" value="F:protein kinase binding"/>
    <property type="evidence" value="ECO:0000353"/>
    <property type="project" value="RGD"/>
</dbReference>
<dbReference type="GO" id="GO:1990791">
    <property type="term" value="P:dorsal root ganglion development"/>
    <property type="evidence" value="ECO:0000270"/>
    <property type="project" value="RGD"/>
</dbReference>
<dbReference type="GO" id="GO:0061052">
    <property type="term" value="P:negative regulation of cell growth involved in cardiac muscle cell development"/>
    <property type="evidence" value="ECO:0000314"/>
    <property type="project" value="RGD"/>
</dbReference>
<dbReference type="GO" id="GO:0060160">
    <property type="term" value="P:negative regulation of dopamine receptor signaling pathway"/>
    <property type="evidence" value="ECO:0000314"/>
    <property type="project" value="RGD"/>
</dbReference>
<dbReference type="GO" id="GO:0045744">
    <property type="term" value="P:negative regulation of G protein-coupled receptor signaling pathway"/>
    <property type="evidence" value="ECO:0000315"/>
    <property type="project" value="RGD"/>
</dbReference>
<dbReference type="GO" id="GO:1900924">
    <property type="term" value="P:negative regulation of glycine import across plasma membrane"/>
    <property type="evidence" value="ECO:0000315"/>
    <property type="project" value="RGD"/>
</dbReference>
<dbReference type="GO" id="GO:1901380">
    <property type="term" value="P:negative regulation of potassium ion transmembrane transport"/>
    <property type="evidence" value="ECO:0000314"/>
    <property type="project" value="RGD"/>
</dbReference>
<dbReference type="GO" id="GO:2000463">
    <property type="term" value="P:positive regulation of excitatory postsynaptic potential"/>
    <property type="evidence" value="ECO:0000315"/>
    <property type="project" value="RGD"/>
</dbReference>
<dbReference type="GO" id="GO:0010460">
    <property type="term" value="P:positive regulation of heart rate"/>
    <property type="evidence" value="ECO:0000315"/>
    <property type="project" value="RGD"/>
</dbReference>
<dbReference type="GO" id="GO:0110053">
    <property type="term" value="P:regulation of actin filament organization"/>
    <property type="evidence" value="ECO:0000314"/>
    <property type="project" value="RGD"/>
</dbReference>
<dbReference type="GO" id="GO:0051924">
    <property type="term" value="P:regulation of calcium ion transport"/>
    <property type="evidence" value="ECO:0000314"/>
    <property type="project" value="RGD"/>
</dbReference>
<dbReference type="GO" id="GO:1901379">
    <property type="term" value="P:regulation of potassium ion transmembrane transport"/>
    <property type="evidence" value="ECO:0000314"/>
    <property type="project" value="RGD"/>
</dbReference>
<dbReference type="GO" id="GO:0001975">
    <property type="term" value="P:response to amphetamine"/>
    <property type="evidence" value="ECO:0000270"/>
    <property type="project" value="RGD"/>
</dbReference>
<dbReference type="GO" id="GO:0042220">
    <property type="term" value="P:response to cocaine"/>
    <property type="evidence" value="ECO:0000270"/>
    <property type="project" value="RGD"/>
</dbReference>
<dbReference type="GO" id="GO:0045471">
    <property type="term" value="P:response to ethanol"/>
    <property type="evidence" value="ECO:0000270"/>
    <property type="project" value="RGD"/>
</dbReference>
<dbReference type="CDD" id="cd08714">
    <property type="entry name" value="RGS_RGS4"/>
    <property type="match status" value="1"/>
</dbReference>
<dbReference type="DisProt" id="DP00063"/>
<dbReference type="FunFam" id="1.10.167.10:FF:000001">
    <property type="entry name" value="Putative regulator of g-protein signaling 12"/>
    <property type="match status" value="1"/>
</dbReference>
<dbReference type="FunFam" id="1.10.196.10:FF:000001">
    <property type="entry name" value="Regulator of G-protein signaling 8"/>
    <property type="match status" value="1"/>
</dbReference>
<dbReference type="Gene3D" id="1.10.196.10">
    <property type="match status" value="1"/>
</dbReference>
<dbReference type="Gene3D" id="1.10.167.10">
    <property type="entry name" value="Regulator of G-protein Signalling 4, domain 2"/>
    <property type="match status" value="1"/>
</dbReference>
<dbReference type="InterPro" id="IPR016137">
    <property type="entry name" value="RGS"/>
</dbReference>
<dbReference type="InterPro" id="IPR034953">
    <property type="entry name" value="RGS_RGS4"/>
</dbReference>
<dbReference type="InterPro" id="IPR036305">
    <property type="entry name" value="RGS_sf"/>
</dbReference>
<dbReference type="InterPro" id="IPR024066">
    <property type="entry name" value="RGS_subdom1/3"/>
</dbReference>
<dbReference type="InterPro" id="IPR044926">
    <property type="entry name" value="RGS_subdomain_2"/>
</dbReference>
<dbReference type="PANTHER" id="PTHR10845">
    <property type="entry name" value="REGULATOR OF G PROTEIN SIGNALING"/>
    <property type="match status" value="1"/>
</dbReference>
<dbReference type="PANTHER" id="PTHR10845:SF184">
    <property type="entry name" value="REGULATOR OF G-PROTEIN SIGNALING 4"/>
    <property type="match status" value="1"/>
</dbReference>
<dbReference type="Pfam" id="PF00615">
    <property type="entry name" value="RGS"/>
    <property type="match status" value="1"/>
</dbReference>
<dbReference type="PRINTS" id="PR01301">
    <property type="entry name" value="RGSPROTEIN"/>
</dbReference>
<dbReference type="SMART" id="SM00315">
    <property type="entry name" value="RGS"/>
    <property type="match status" value="1"/>
</dbReference>
<dbReference type="SUPFAM" id="SSF48097">
    <property type="entry name" value="Regulator of G-protein signaling, RGS"/>
    <property type="match status" value="1"/>
</dbReference>
<dbReference type="PROSITE" id="PS50132">
    <property type="entry name" value="RGS"/>
    <property type="match status" value="1"/>
</dbReference>
<feature type="chain" id="PRO_0000204187" description="Regulator of G-protein signaling 4">
    <location>
        <begin position="1"/>
        <end position="205"/>
    </location>
</feature>
<feature type="domain" description="RGS" evidence="2">
    <location>
        <begin position="62"/>
        <end position="178"/>
    </location>
</feature>
<feature type="lipid moiety-binding region" description="S-palmitoyl cysteine" evidence="1">
    <location>
        <position position="2"/>
    </location>
</feature>
<feature type="lipid moiety-binding region" description="S-palmitoyl cysteine" evidence="1">
    <location>
        <position position="12"/>
    </location>
</feature>
<feature type="lipid moiety-binding region" description="S-palmitoyl cysteine" evidence="1">
    <location>
        <position position="95"/>
    </location>
</feature>
<feature type="helix" evidence="4">
    <location>
        <begin position="53"/>
        <end position="59"/>
    </location>
</feature>
<feature type="helix" evidence="4">
    <location>
        <begin position="63"/>
        <end position="68"/>
    </location>
</feature>
<feature type="helix" evidence="4">
    <location>
        <begin position="70"/>
        <end position="82"/>
    </location>
</feature>
<feature type="helix" evidence="4">
    <location>
        <begin position="87"/>
        <end position="100"/>
    </location>
</feature>
<feature type="turn" evidence="4">
    <location>
        <begin position="104"/>
        <end position="106"/>
    </location>
</feature>
<feature type="helix" evidence="4">
    <location>
        <begin position="107"/>
        <end position="118"/>
    </location>
</feature>
<feature type="helix" evidence="4">
    <location>
        <begin position="131"/>
        <end position="140"/>
    </location>
</feature>
<feature type="turn" evidence="4">
    <location>
        <begin position="146"/>
        <end position="149"/>
    </location>
</feature>
<feature type="helix" evidence="4">
    <location>
        <begin position="150"/>
        <end position="162"/>
    </location>
</feature>
<feature type="helix" evidence="4">
    <location>
        <begin position="164"/>
        <end position="168"/>
    </location>
</feature>
<feature type="helix" evidence="4">
    <location>
        <begin position="172"/>
        <end position="175"/>
    </location>
</feature>
<sequence>MCKGLAGLPASCLRSAKDMKHRLGFLLQKSDSCEHSSSHSKKDKVVTCQRVSQEEVKKWAESLENLINHECGLAAFKAFLKSEYSEENIDFWISCEEYKKIKSPSKLSPKAKKIYNEFISVQATKEVNLDSCTREETSRNMLEPTITCFDEAQKKIFNLMEKDSYRRFLKSRFYLDLTNPSSCGAEKQKGAKSSADCTSLVPQCA</sequence>
<organism>
    <name type="scientific">Rattus norvegicus</name>
    <name type="common">Rat</name>
    <dbReference type="NCBI Taxonomy" id="10116"/>
    <lineage>
        <taxon>Eukaryota</taxon>
        <taxon>Metazoa</taxon>
        <taxon>Chordata</taxon>
        <taxon>Craniata</taxon>
        <taxon>Vertebrata</taxon>
        <taxon>Euteleostomi</taxon>
        <taxon>Mammalia</taxon>
        <taxon>Eutheria</taxon>
        <taxon>Euarchontoglires</taxon>
        <taxon>Glires</taxon>
        <taxon>Rodentia</taxon>
        <taxon>Myomorpha</taxon>
        <taxon>Muroidea</taxon>
        <taxon>Muridae</taxon>
        <taxon>Murinae</taxon>
        <taxon>Rattus</taxon>
    </lineage>
</organism>
<keyword id="KW-0002">3D-structure</keyword>
<keyword id="KW-0449">Lipoprotein</keyword>
<keyword id="KW-0564">Palmitate</keyword>
<keyword id="KW-0597">Phosphoprotein</keyword>
<keyword id="KW-1185">Reference proteome</keyword>
<keyword id="KW-0734">Signal transduction inhibitor</keyword>
<reference key="1">
    <citation type="journal article" date="1996" name="Nature">
        <title>Inhibition of G-protein-mediated MAP kinase activation by a new mammalian gene family.</title>
        <authorList>
            <person name="Druey K.M."/>
            <person name="Blumer K.J."/>
            <person name="Kang V.H."/>
            <person name="Kehrl J.H."/>
        </authorList>
    </citation>
    <scope>NUCLEOTIDE SEQUENCE [MRNA]</scope>
</reference>
<reference key="2">
    <citation type="submission" date="1998-12" db="EMBL/GenBank/DDBJ databases">
        <title>The complete cDNA sequence analysis of the rat RGS4.</title>
        <authorList>
            <person name="Zhou M.-Y."/>
            <person name="Gomez-Sanchez C.E."/>
            <person name="Gomez-Sanchez E.P."/>
        </authorList>
    </citation>
    <scope>NUCLEOTIDE SEQUENCE [MRNA]</scope>
    <source>
        <strain>Sprague-Dawley</strain>
    </source>
</reference>
<reference key="3">
    <citation type="journal article" date="1996" name="Cell">
        <title>EGL-10 regulates G protein signaling in the C. elegans nervous system and shares a conserved domain with many mammalian proteins.</title>
        <authorList>
            <person name="Koelle M.R."/>
            <person name="Horvitz H.R."/>
        </authorList>
    </citation>
    <scope>NUCLEOTIDE SEQUENCE [MRNA] OF 93-159</scope>
    <source>
        <tissue>Brain</tissue>
    </source>
</reference>
<reference key="4">
    <citation type="journal article" date="2000" name="J. Biol. Chem.">
        <title>Natriuretic peptides inhibit G protein activation. Mediation through cross-talk between cyclic GMP-dependent protein kinase and regulators of G protein-signaling proteins.</title>
        <authorList>
            <person name="Pedram A."/>
            <person name="Razandi M."/>
            <person name="Kehrl J."/>
            <person name="Levin E.R."/>
        </authorList>
    </citation>
    <scope>PHOSPHORYLATION</scope>
</reference>
<reference key="5">
    <citation type="journal article" date="1997" name="Science">
        <title>Inhibition of brain Gz GAP and other RGS proteins by palmitoylation of G protein alpha subunits.</title>
        <authorList>
            <person name="Tu Y."/>
            <person name="Wang J."/>
            <person name="Ross E.M."/>
        </authorList>
    </citation>
    <scope>INHIBITION</scope>
</reference>
<reference key="6">
    <citation type="journal article" date="1997" name="Cell">
        <title>Structure of RGS4 bound to AlF4-activated G(i alpha1): stabilization of the transition state for GTP hydrolysis.</title>
        <authorList>
            <person name="Tesmer J.J.G."/>
            <person name="Berman D.M."/>
            <person name="Gilman A.G."/>
            <person name="Sprang S.R."/>
        </authorList>
    </citation>
    <scope>X-RAY CRYSTALLOGRAPHY (2.8 ANGSTROMS) OF COMPLEX WITH G(I)-ALPHA</scope>
</reference>
<comment type="function">
    <text>Inhibits signal transduction by increasing the GTPase activity of G protein alpha subunits thereby driving them into their inactive GDP-bound form. Activity on G(z)-alpha is inhibited by phosphorylation of the G-protein. Activity on G(z)-alpha and G(i)-alpha-1 is inhibited by palmitoylation of the G-protein.</text>
</comment>
<comment type="PTM">
    <text evidence="1">Either Cys-2 or Cys-12 or both are palmitoylated.</text>
</comment>
<comment type="PTM">
    <text evidence="3">Phosphorylated by cyclic GMP-dependent protein kinase.</text>
</comment>